<feature type="chain" id="PRO_0000442287" description="Protein POLR1D, isoform 2">
    <location>
        <begin position="1"/>
        <end position="122"/>
    </location>
</feature>
<feature type="region of interest" description="Disordered" evidence="1">
    <location>
        <begin position="48"/>
        <end position="122"/>
    </location>
</feature>
<feature type="compositionally biased region" description="Basic and acidic residues" evidence="1">
    <location>
        <begin position="57"/>
        <end position="83"/>
    </location>
</feature>
<feature type="compositionally biased region" description="Basic residues" evidence="1">
    <location>
        <begin position="84"/>
        <end position="96"/>
    </location>
</feature>
<feature type="compositionally biased region" description="Basic and acidic residues" evidence="1">
    <location>
        <begin position="110"/>
        <end position="122"/>
    </location>
</feature>
<feature type="modified residue" description="N-acetylmethionine" evidence="2 5 6 7">
    <location>
        <position position="1"/>
    </location>
</feature>
<feature type="modified residue" description="Phosphoserine" evidence="4">
    <location>
        <position position="104"/>
    </location>
</feature>
<organism>
    <name type="scientific">Homo sapiens</name>
    <name type="common">Human</name>
    <dbReference type="NCBI Taxonomy" id="9606"/>
    <lineage>
        <taxon>Eukaryota</taxon>
        <taxon>Metazoa</taxon>
        <taxon>Chordata</taxon>
        <taxon>Craniata</taxon>
        <taxon>Vertebrata</taxon>
        <taxon>Euteleostomi</taxon>
        <taxon>Mammalia</taxon>
        <taxon>Eutheria</taxon>
        <taxon>Euarchontoglires</taxon>
        <taxon>Primates</taxon>
        <taxon>Haplorrhini</taxon>
        <taxon>Catarrhini</taxon>
        <taxon>Hominidae</taxon>
        <taxon>Homo</taxon>
    </lineage>
</organism>
<evidence type="ECO:0000256" key="1">
    <source>
        <dbReference type="SAM" id="MobiDB-lite"/>
    </source>
</evidence>
<evidence type="ECO:0000269" key="2">
    <source ref="5"/>
</evidence>
<evidence type="ECO:0000305" key="3"/>
<evidence type="ECO:0007744" key="4">
    <source>
    </source>
</evidence>
<evidence type="ECO:0007744" key="5">
    <source>
    </source>
</evidence>
<evidence type="ECO:0007744" key="6">
    <source>
    </source>
</evidence>
<evidence type="ECO:0007744" key="7">
    <source>
    </source>
</evidence>
<proteinExistence type="evidence at protein level"/>
<comment type="alternative products">
    <event type="alternative splicing"/>
    <isoform>
        <id>P0DPB5-1</id>
        <name>2</name>
        <sequence type="displayed"/>
    </isoform>
    <isoform>
        <id>P0DPB6-1</id>
        <id>Q9Y2S0-1</id>
        <name>1</name>
        <sequence type="external"/>
    </isoform>
</comment>
<comment type="caution">
    <text evidence="3">POLR1D isoform 2 lacks an RNA polymerase domain and therefore cannot have DNA-dependent RNA polymerase function.</text>
</comment>
<accession>P0DPB5</accession>
<accession>Q5TBX2</accession>
<accession>Q96BR3</accession>
<accession>Q9Y2S0</accession>
<keyword id="KW-0007">Acetylation</keyword>
<keyword id="KW-0025">Alternative splicing</keyword>
<keyword id="KW-0903">Direct protein sequencing</keyword>
<keyword id="KW-0597">Phosphoprotein</keyword>
<keyword id="KW-1267">Proteomics identification</keyword>
<keyword id="KW-1185">Reference proteome</keyword>
<gene>
    <name type="primary">POLR1D</name>
</gene>
<protein>
    <recommendedName>
        <fullName>Protein POLR1D, isoform 2</fullName>
    </recommendedName>
</protein>
<reference key="1">
    <citation type="journal article" date="2004" name="Nat. Genet.">
        <title>Complete sequencing and characterization of 21,243 full-length human cDNAs.</title>
        <authorList>
            <person name="Ota T."/>
            <person name="Suzuki Y."/>
            <person name="Nishikawa T."/>
            <person name="Otsuki T."/>
            <person name="Sugiyama T."/>
            <person name="Irie R."/>
            <person name="Wakamatsu A."/>
            <person name="Hayashi K."/>
            <person name="Sato H."/>
            <person name="Nagai K."/>
            <person name="Kimura K."/>
            <person name="Makita H."/>
            <person name="Sekine M."/>
            <person name="Obayashi M."/>
            <person name="Nishi T."/>
            <person name="Shibahara T."/>
            <person name="Tanaka T."/>
            <person name="Ishii S."/>
            <person name="Yamamoto J."/>
            <person name="Saito K."/>
            <person name="Kawai Y."/>
            <person name="Isono Y."/>
            <person name="Nakamura Y."/>
            <person name="Nagahari K."/>
            <person name="Murakami K."/>
            <person name="Yasuda T."/>
            <person name="Iwayanagi T."/>
            <person name="Wagatsuma M."/>
            <person name="Shiratori A."/>
            <person name="Sudo H."/>
            <person name="Hosoiri T."/>
            <person name="Kaku Y."/>
            <person name="Kodaira H."/>
            <person name="Kondo H."/>
            <person name="Sugawara M."/>
            <person name="Takahashi M."/>
            <person name="Kanda K."/>
            <person name="Yokoi T."/>
            <person name="Furuya T."/>
            <person name="Kikkawa E."/>
            <person name="Omura Y."/>
            <person name="Abe K."/>
            <person name="Kamihara K."/>
            <person name="Katsuta N."/>
            <person name="Sato K."/>
            <person name="Tanikawa M."/>
            <person name="Yamazaki M."/>
            <person name="Ninomiya K."/>
            <person name="Ishibashi T."/>
            <person name="Yamashita H."/>
            <person name="Murakawa K."/>
            <person name="Fujimori K."/>
            <person name="Tanai H."/>
            <person name="Kimata M."/>
            <person name="Watanabe M."/>
            <person name="Hiraoka S."/>
            <person name="Chiba Y."/>
            <person name="Ishida S."/>
            <person name="Ono Y."/>
            <person name="Takiguchi S."/>
            <person name="Watanabe S."/>
            <person name="Yosida M."/>
            <person name="Hotuta T."/>
            <person name="Kusano J."/>
            <person name="Kanehori K."/>
            <person name="Takahashi-Fujii A."/>
            <person name="Hara H."/>
            <person name="Tanase T.-O."/>
            <person name="Nomura Y."/>
            <person name="Togiya S."/>
            <person name="Komai F."/>
            <person name="Hara R."/>
            <person name="Takeuchi K."/>
            <person name="Arita M."/>
            <person name="Imose N."/>
            <person name="Musashino K."/>
            <person name="Yuuki H."/>
            <person name="Oshima A."/>
            <person name="Sasaki N."/>
            <person name="Aotsuka S."/>
            <person name="Yoshikawa Y."/>
            <person name="Matsunawa H."/>
            <person name="Ichihara T."/>
            <person name="Shiohata N."/>
            <person name="Sano S."/>
            <person name="Moriya S."/>
            <person name="Momiyama H."/>
            <person name="Satoh N."/>
            <person name="Takami S."/>
            <person name="Terashima Y."/>
            <person name="Suzuki O."/>
            <person name="Nakagawa S."/>
            <person name="Senoh A."/>
            <person name="Mizoguchi H."/>
            <person name="Goto Y."/>
            <person name="Shimizu F."/>
            <person name="Wakebe H."/>
            <person name="Hishigaki H."/>
            <person name="Watanabe T."/>
            <person name="Sugiyama A."/>
            <person name="Takemoto M."/>
            <person name="Kawakami B."/>
            <person name="Yamazaki M."/>
            <person name="Watanabe K."/>
            <person name="Kumagai A."/>
            <person name="Itakura S."/>
            <person name="Fukuzumi Y."/>
            <person name="Fujimori Y."/>
            <person name="Komiyama M."/>
            <person name="Tashiro H."/>
            <person name="Tanigami A."/>
            <person name="Fujiwara T."/>
            <person name="Ono T."/>
            <person name="Yamada K."/>
            <person name="Fujii Y."/>
            <person name="Ozaki K."/>
            <person name="Hirao M."/>
            <person name="Ohmori Y."/>
            <person name="Kawabata A."/>
            <person name="Hikiji T."/>
            <person name="Kobatake N."/>
            <person name="Inagaki H."/>
            <person name="Ikema Y."/>
            <person name="Okamoto S."/>
            <person name="Okitani R."/>
            <person name="Kawakami T."/>
            <person name="Noguchi S."/>
            <person name="Itoh T."/>
            <person name="Shigeta K."/>
            <person name="Senba T."/>
            <person name="Matsumura K."/>
            <person name="Nakajima Y."/>
            <person name="Mizuno T."/>
            <person name="Morinaga M."/>
            <person name="Sasaki M."/>
            <person name="Togashi T."/>
            <person name="Oyama M."/>
            <person name="Hata H."/>
            <person name="Watanabe M."/>
            <person name="Komatsu T."/>
            <person name="Mizushima-Sugano J."/>
            <person name="Satoh T."/>
            <person name="Shirai Y."/>
            <person name="Takahashi Y."/>
            <person name="Nakagawa K."/>
            <person name="Okumura K."/>
            <person name="Nagase T."/>
            <person name="Nomura N."/>
            <person name="Kikuchi H."/>
            <person name="Masuho Y."/>
            <person name="Yamashita R."/>
            <person name="Nakai K."/>
            <person name="Yada T."/>
            <person name="Nakamura Y."/>
            <person name="Ohara O."/>
            <person name="Isogai T."/>
            <person name="Sugano S."/>
        </authorList>
    </citation>
    <scope>NUCLEOTIDE SEQUENCE [LARGE SCALE MRNA] (ISOFORM 2)</scope>
    <source>
        <tissue>Cerebellum</tissue>
    </source>
</reference>
<reference key="2">
    <citation type="journal article" date="2004" name="Nature">
        <title>The DNA sequence and analysis of human chromosome 13.</title>
        <authorList>
            <person name="Dunham A."/>
            <person name="Matthews L.H."/>
            <person name="Burton J."/>
            <person name="Ashurst J.L."/>
            <person name="Howe K.L."/>
            <person name="Ashcroft K.J."/>
            <person name="Beare D.M."/>
            <person name="Burford D.C."/>
            <person name="Hunt S.E."/>
            <person name="Griffiths-Jones S."/>
            <person name="Jones M.C."/>
            <person name="Keenan S.J."/>
            <person name="Oliver K."/>
            <person name="Scott C.E."/>
            <person name="Ainscough R."/>
            <person name="Almeida J.P."/>
            <person name="Ambrose K.D."/>
            <person name="Andrews D.T."/>
            <person name="Ashwell R.I.S."/>
            <person name="Babbage A.K."/>
            <person name="Bagguley C.L."/>
            <person name="Bailey J."/>
            <person name="Bannerjee R."/>
            <person name="Barlow K.F."/>
            <person name="Bates K."/>
            <person name="Beasley H."/>
            <person name="Bird C.P."/>
            <person name="Bray-Allen S."/>
            <person name="Brown A.J."/>
            <person name="Brown J.Y."/>
            <person name="Burrill W."/>
            <person name="Carder C."/>
            <person name="Carter N.P."/>
            <person name="Chapman J.C."/>
            <person name="Clamp M.E."/>
            <person name="Clark S.Y."/>
            <person name="Clarke G."/>
            <person name="Clee C.M."/>
            <person name="Clegg S.C."/>
            <person name="Cobley V."/>
            <person name="Collins J.E."/>
            <person name="Corby N."/>
            <person name="Coville G.J."/>
            <person name="Deloukas P."/>
            <person name="Dhami P."/>
            <person name="Dunham I."/>
            <person name="Dunn M."/>
            <person name="Earthrowl M.E."/>
            <person name="Ellington A.G."/>
            <person name="Faulkner L."/>
            <person name="Frankish A.G."/>
            <person name="Frankland J."/>
            <person name="French L."/>
            <person name="Garner P."/>
            <person name="Garnett J."/>
            <person name="Gilbert J.G.R."/>
            <person name="Gilson C.J."/>
            <person name="Ghori J."/>
            <person name="Grafham D.V."/>
            <person name="Gribble S.M."/>
            <person name="Griffiths C."/>
            <person name="Hall R.E."/>
            <person name="Hammond S."/>
            <person name="Harley J.L."/>
            <person name="Hart E.A."/>
            <person name="Heath P.D."/>
            <person name="Howden P.J."/>
            <person name="Huckle E.J."/>
            <person name="Hunt P.J."/>
            <person name="Hunt A.R."/>
            <person name="Johnson C."/>
            <person name="Johnson D."/>
            <person name="Kay M."/>
            <person name="Kimberley A.M."/>
            <person name="King A."/>
            <person name="Laird G.K."/>
            <person name="Langford C.J."/>
            <person name="Lawlor S."/>
            <person name="Leongamornlert D.A."/>
            <person name="Lloyd D.M."/>
            <person name="Lloyd C."/>
            <person name="Loveland J.E."/>
            <person name="Lovell J."/>
            <person name="Martin S."/>
            <person name="Mashreghi-Mohammadi M."/>
            <person name="McLaren S.J."/>
            <person name="McMurray A."/>
            <person name="Milne S."/>
            <person name="Moore M.J.F."/>
            <person name="Nickerson T."/>
            <person name="Palmer S.A."/>
            <person name="Pearce A.V."/>
            <person name="Peck A.I."/>
            <person name="Pelan S."/>
            <person name="Phillimore B."/>
            <person name="Porter K.M."/>
            <person name="Rice C.M."/>
            <person name="Searle S."/>
            <person name="Sehra H.K."/>
            <person name="Shownkeen R."/>
            <person name="Skuce C.D."/>
            <person name="Smith M."/>
            <person name="Steward C.A."/>
            <person name="Sycamore N."/>
            <person name="Tester J."/>
            <person name="Thomas D.W."/>
            <person name="Tracey A."/>
            <person name="Tromans A."/>
            <person name="Tubby B."/>
            <person name="Wall M."/>
            <person name="Wallis J.M."/>
            <person name="West A.P."/>
            <person name="Whitehead S.L."/>
            <person name="Willey D.L."/>
            <person name="Wilming L."/>
            <person name="Wray P.W."/>
            <person name="Wright M.W."/>
            <person name="Young L."/>
            <person name="Coulson A."/>
            <person name="Durbin R.M."/>
            <person name="Hubbard T."/>
            <person name="Sulston J.E."/>
            <person name="Beck S."/>
            <person name="Bentley D.R."/>
            <person name="Rogers J."/>
            <person name="Ross M.T."/>
        </authorList>
    </citation>
    <scope>NUCLEOTIDE SEQUENCE [LARGE SCALE GENOMIC DNA]</scope>
</reference>
<reference key="3">
    <citation type="submission" date="2005-07" db="EMBL/GenBank/DDBJ databases">
        <authorList>
            <person name="Mural R.J."/>
            <person name="Istrail S."/>
            <person name="Sutton G.G."/>
            <person name="Florea L."/>
            <person name="Halpern A.L."/>
            <person name="Mobarry C.M."/>
            <person name="Lippert R."/>
            <person name="Walenz B."/>
            <person name="Shatkay H."/>
            <person name="Dew I."/>
            <person name="Miller J.R."/>
            <person name="Flanigan M.J."/>
            <person name="Edwards N.J."/>
            <person name="Bolanos R."/>
            <person name="Fasulo D."/>
            <person name="Halldorsson B.V."/>
            <person name="Hannenhalli S."/>
            <person name="Turner R."/>
            <person name="Yooseph S."/>
            <person name="Lu F."/>
            <person name="Nusskern D.R."/>
            <person name="Shue B.C."/>
            <person name="Zheng X.H."/>
            <person name="Zhong F."/>
            <person name="Delcher A.L."/>
            <person name="Huson D.H."/>
            <person name="Kravitz S.A."/>
            <person name="Mouchard L."/>
            <person name="Reinert K."/>
            <person name="Remington K.A."/>
            <person name="Clark A.G."/>
            <person name="Waterman M.S."/>
            <person name="Eichler E.E."/>
            <person name="Adams M.D."/>
            <person name="Hunkapiller M.W."/>
            <person name="Myers E.W."/>
            <person name="Venter J.C."/>
        </authorList>
    </citation>
    <scope>NUCLEOTIDE SEQUENCE [LARGE SCALE GENOMIC DNA]</scope>
</reference>
<reference key="4">
    <citation type="journal article" date="2004" name="Genome Res.">
        <title>The status, quality, and expansion of the NIH full-length cDNA project: the Mammalian Gene Collection (MGC).</title>
        <authorList>
            <consortium name="The MGC Project Team"/>
        </authorList>
    </citation>
    <scope>NUCLEOTIDE SEQUENCE [LARGE SCALE MRNA] (ISOFORM 2)</scope>
    <source>
        <tissue>Colon</tissue>
        <tissue>Eye</tissue>
    </source>
</reference>
<reference key="5">
    <citation type="submission" date="2008-12" db="UniProtKB">
        <authorList>
            <person name="Bienvenut W.V."/>
            <person name="Lilla S."/>
            <person name="von Kriegsheim A."/>
            <person name="Lempens A."/>
            <person name="Kolch W."/>
        </authorList>
    </citation>
    <scope>PROTEIN SEQUENCE OF 1-9</scope>
    <scope>ACETYLATION AT MET-1</scope>
    <scope>IDENTIFICATION BY MASS SPECTROMETRY</scope>
    <source>
        <tissue>Ovarian carcinoma</tissue>
    </source>
</reference>
<reference key="6">
    <citation type="journal article" date="2008" name="Proc. Natl. Acad. Sci. U.S.A.">
        <title>A quantitative atlas of mitotic phosphorylation.</title>
        <authorList>
            <person name="Dephoure N."/>
            <person name="Zhou C."/>
            <person name="Villen J."/>
            <person name="Beausoleil S.A."/>
            <person name="Bakalarski C.E."/>
            <person name="Elledge S.J."/>
            <person name="Gygi S.P."/>
        </authorList>
    </citation>
    <scope>PHOSPHORYLATION [LARGE SCALE ANALYSIS] AT SER-104</scope>
    <scope>IDENTIFICATION BY MASS SPECTROMETRY [LARGE SCALE ANALYSIS]</scope>
    <source>
        <tissue>Cervix carcinoma</tissue>
    </source>
</reference>
<reference key="7">
    <citation type="journal article" date="2009" name="Anal. Chem.">
        <title>Lys-N and trypsin cover complementary parts of the phosphoproteome in a refined SCX-based approach.</title>
        <authorList>
            <person name="Gauci S."/>
            <person name="Helbig A.O."/>
            <person name="Slijper M."/>
            <person name="Krijgsveld J."/>
            <person name="Heck A.J."/>
            <person name="Mohammed S."/>
        </authorList>
    </citation>
    <scope>ACETYLATION [LARGE SCALE ANALYSIS] AT MET-1</scope>
    <scope>IDENTIFICATION BY MASS SPECTROMETRY [LARGE SCALE ANALYSIS]</scope>
</reference>
<reference key="8">
    <citation type="journal article" date="2012" name="Mol. Cell. Proteomics">
        <title>Comparative large-scale characterisation of plant vs. mammal proteins reveals similar and idiosyncratic N-alpha acetylation features.</title>
        <authorList>
            <person name="Bienvenut W.V."/>
            <person name="Sumpton D."/>
            <person name="Martinez A."/>
            <person name="Lilla S."/>
            <person name="Espagne C."/>
            <person name="Meinnel T."/>
            <person name="Giglione C."/>
        </authorList>
    </citation>
    <scope>ACETYLATION [LARGE SCALE ANALYSIS] AT MET-1</scope>
    <scope>IDENTIFICATION BY MASS SPECTROMETRY [LARGE SCALE ANALYSIS]</scope>
</reference>
<reference key="9">
    <citation type="journal article" date="2012" name="Proc. Natl. Acad. Sci. U.S.A.">
        <title>N-terminal acetylome analyses and functional insights of the N-terminal acetyltransferase NatB.</title>
        <authorList>
            <person name="Van Damme P."/>
            <person name="Lasa M."/>
            <person name="Polevoda B."/>
            <person name="Gazquez C."/>
            <person name="Elosegui-Artola A."/>
            <person name="Kim D.S."/>
            <person name="De Juan-Pardo E."/>
            <person name="Demeyer K."/>
            <person name="Hole K."/>
            <person name="Larrea E."/>
            <person name="Timmerman E."/>
            <person name="Prieto J."/>
            <person name="Arnesen T."/>
            <person name="Sherman F."/>
            <person name="Gevaert K."/>
            <person name="Aldabe R."/>
        </authorList>
    </citation>
    <scope>ACETYLATION [LARGE SCALE ANALYSIS] AT MET-1</scope>
    <scope>IDENTIFICATION BY MASS SPECTROMETRY [LARGE SCALE ANALYSIS]</scope>
</reference>
<name>RPC22_HUMAN</name>
<dbReference type="EMBL" id="AK311833">
    <property type="protein sequence ID" value="BAG34775.1"/>
    <property type="molecule type" value="mRNA"/>
</dbReference>
<dbReference type="EMBL" id="AL136439">
    <property type="status" value="NOT_ANNOTATED_CDS"/>
    <property type="molecule type" value="Genomic_DNA"/>
</dbReference>
<dbReference type="EMBL" id="CH471075">
    <property type="protein sequence ID" value="EAX08416.1"/>
    <property type="molecule type" value="Genomic_DNA"/>
</dbReference>
<dbReference type="EMBL" id="BC015319">
    <property type="protein sequence ID" value="AAH15319.1"/>
    <property type="molecule type" value="mRNA"/>
</dbReference>
<dbReference type="EMBL" id="BC018528">
    <property type="protein sequence ID" value="AAH18528.1"/>
    <property type="molecule type" value="mRNA"/>
</dbReference>
<dbReference type="CCDS" id="CCDS9324.1">
    <molecule id="P0DPB5-1"/>
</dbReference>
<dbReference type="RefSeq" id="NP_001193488.1">
    <property type="nucleotide sequence ID" value="NM_001206559.1"/>
</dbReference>
<dbReference type="RefSeq" id="NP_689918.1">
    <molecule id="P0DPB5-1"/>
    <property type="nucleotide sequence ID" value="NM_152705.3"/>
</dbReference>
<dbReference type="RefSeq" id="XP_005266471.1">
    <property type="nucleotide sequence ID" value="XM_005266414.2"/>
</dbReference>
<dbReference type="RefSeq" id="XP_016876112.1">
    <property type="nucleotide sequence ID" value="XM_017020623.1"/>
</dbReference>
<dbReference type="RefSeq" id="XP_047286337.1">
    <molecule id="P0DPB5-1"/>
    <property type="nucleotide sequence ID" value="XM_047430381.1"/>
</dbReference>
<dbReference type="RefSeq" id="XP_054230572.1">
    <molecule id="P0DPB5-1"/>
    <property type="nucleotide sequence ID" value="XM_054374597.1"/>
</dbReference>
<dbReference type="SMR" id="P0DPB5"/>
<dbReference type="CORUM" id="P0DPB5"/>
<dbReference type="IntAct" id="P0DPB5">
    <property type="interactions" value="34"/>
</dbReference>
<dbReference type="iPTMnet" id="P0DPB5"/>
<dbReference type="BioMuta" id="POLR1D"/>
<dbReference type="jPOST" id="P0DPB5"/>
<dbReference type="MassIVE" id="P0DPB5"/>
<dbReference type="Pumba" id="P0DPB5"/>
<dbReference type="Antibodypedia" id="22678">
    <property type="antibodies" value="112 antibodies from 24 providers"/>
</dbReference>
<dbReference type="DNASU" id="51082"/>
<dbReference type="Ensembl" id="ENST00000399697.7">
    <molecule id="P0DPB5-1"/>
    <property type="protein sequence ID" value="ENSP00000382604.3"/>
    <property type="gene ID" value="ENSG00000186184.20"/>
</dbReference>
<dbReference type="GeneID" id="51082"/>
<dbReference type="AGR" id="HGNC:20422"/>
<dbReference type="CTD" id="51082"/>
<dbReference type="DisGeNET" id="51082"/>
<dbReference type="GeneCards" id="POLR1D"/>
<dbReference type="GeneReviews" id="POLR1D"/>
<dbReference type="HGNC" id="HGNC:20422">
    <property type="gene designation" value="POLR1D"/>
</dbReference>
<dbReference type="HPA" id="ENSG00000186184">
    <property type="expression patterns" value="Low tissue specificity"/>
</dbReference>
<dbReference type="MalaCards" id="POLR1D"/>
<dbReference type="MIM" id="613715">
    <property type="type" value="gene"/>
</dbReference>
<dbReference type="neXtProt" id="NX_P0DPB5"/>
<dbReference type="OpenTargets" id="ENSG00000186184"/>
<dbReference type="Orphanet" id="861">
    <property type="disease" value="Treacher-Collins syndrome"/>
</dbReference>
<dbReference type="VEuPathDB" id="HostDB:ENSG00000186184"/>
<dbReference type="GeneTree" id="ENSGT00550000075160"/>
<dbReference type="OrthoDB" id="510325at2759"/>
<dbReference type="PathwayCommons" id="P0DPB5"/>
<dbReference type="Reactome" id="R-HSA-1834949">
    <property type="pathway name" value="Cytosolic sensors of pathogen-associated DNA"/>
</dbReference>
<dbReference type="Reactome" id="R-HSA-427413">
    <property type="pathway name" value="NoRC negatively regulates rRNA expression"/>
</dbReference>
<dbReference type="Reactome" id="R-HSA-5250924">
    <property type="pathway name" value="B-WICH complex positively regulates rRNA expression"/>
</dbReference>
<dbReference type="Reactome" id="R-HSA-73762">
    <property type="pathway name" value="RNA Polymerase I Transcription Initiation"/>
</dbReference>
<dbReference type="Reactome" id="R-HSA-73772">
    <property type="pathway name" value="RNA Polymerase I Promoter Escape"/>
</dbReference>
<dbReference type="Reactome" id="R-HSA-73780">
    <property type="pathway name" value="RNA Polymerase III Chain Elongation"/>
</dbReference>
<dbReference type="Reactome" id="R-HSA-73863">
    <property type="pathway name" value="RNA Polymerase I Transcription Termination"/>
</dbReference>
<dbReference type="Reactome" id="R-HSA-73980">
    <property type="pathway name" value="RNA Polymerase III Transcription Termination"/>
</dbReference>
<dbReference type="Reactome" id="R-HSA-749476">
    <property type="pathway name" value="RNA Polymerase III Abortive And Retractive Initiation"/>
</dbReference>
<dbReference type="Reactome" id="R-HSA-76061">
    <property type="pathway name" value="RNA Polymerase III Transcription Initiation From Type 1 Promoter"/>
</dbReference>
<dbReference type="Reactome" id="R-HSA-76066">
    <property type="pathway name" value="RNA Polymerase III Transcription Initiation From Type 2 Promoter"/>
</dbReference>
<dbReference type="Reactome" id="R-HSA-76071">
    <property type="pathway name" value="RNA Polymerase III Transcription Initiation From Type 3 Promoter"/>
</dbReference>
<dbReference type="SignaLink" id="P0DPB5"/>
<dbReference type="SIGNOR" id="P0DPB5"/>
<dbReference type="CD-CODE" id="91857CE7">
    <property type="entry name" value="Nucleolus"/>
</dbReference>
<dbReference type="ChiTaRS" id="POLR1D">
    <property type="organism name" value="human"/>
</dbReference>
<dbReference type="Pharos" id="P0DPB5">
    <property type="development level" value="Tbio"/>
</dbReference>
<dbReference type="Proteomes" id="UP000005640">
    <property type="component" value="Chromosome 13"/>
</dbReference>
<dbReference type="Bgee" id="ENSG00000186184">
    <property type="expression patterns" value="Expressed in body of pancreas and 207 other cell types or tissues"/>
</dbReference>
<dbReference type="ExpressionAtlas" id="P0DPB5">
    <property type="expression patterns" value="baseline and differential"/>
</dbReference>
<dbReference type="GO" id="GO:0005829">
    <property type="term" value="C:cytosol"/>
    <property type="evidence" value="ECO:0000304"/>
    <property type="project" value="Reactome"/>
</dbReference>
<dbReference type="GO" id="GO:0005654">
    <property type="term" value="C:nucleoplasm"/>
    <property type="evidence" value="ECO:0000304"/>
    <property type="project" value="Reactome"/>
</dbReference>
<dbReference type="InterPro" id="IPR038948">
    <property type="entry name" value="POLR1D-like"/>
</dbReference>
<dbReference type="PANTHER" id="PTHR34769">
    <property type="entry name" value="RCG42593, ISOFORM CRA_A"/>
    <property type="match status" value="1"/>
</dbReference>
<dbReference type="PANTHER" id="PTHR34769:SF1">
    <property type="entry name" value="RNA POLYMERASE I AND III SUBUNIT D"/>
    <property type="match status" value="1"/>
</dbReference>
<sequence>MEEDQELERKAIEELLKEAKRGKTRAETMGPMGWMKCPLASTNKRFLINTIKNTLPSHKEQDHEQKEGDKEPAKSQAQKEENPKKHRSHPYKHSFRARGSASYSPPRKRSSQDKYEKRSNRR</sequence>